<gene>
    <name evidence="1" type="primary">rplO</name>
    <name type="ordered locus">BCG9842_B5176</name>
</gene>
<organism>
    <name type="scientific">Bacillus cereus (strain G9842)</name>
    <dbReference type="NCBI Taxonomy" id="405531"/>
    <lineage>
        <taxon>Bacteria</taxon>
        <taxon>Bacillati</taxon>
        <taxon>Bacillota</taxon>
        <taxon>Bacilli</taxon>
        <taxon>Bacillales</taxon>
        <taxon>Bacillaceae</taxon>
        <taxon>Bacillus</taxon>
        <taxon>Bacillus cereus group</taxon>
    </lineage>
</organism>
<evidence type="ECO:0000255" key="1">
    <source>
        <dbReference type="HAMAP-Rule" id="MF_01341"/>
    </source>
</evidence>
<evidence type="ECO:0000256" key="2">
    <source>
        <dbReference type="SAM" id="MobiDB-lite"/>
    </source>
</evidence>
<evidence type="ECO:0000305" key="3"/>
<proteinExistence type="inferred from homology"/>
<name>RL15_BACC2</name>
<sequence length="146" mass="15522">MKLHELKPAEGSRKVRNRVGRGIGSGNGKTAGKGHKGQNARSGGGVRLGFEGGQTPLFRRLPKRGFTNINRKEFTIVNLSTLNRFEDGTEVTPELLLETGVISKLNDGVKILASGAVEKKLTVKAHKFSSSAKEAIEAAGGSVEVI</sequence>
<feature type="chain" id="PRO_1000142773" description="Large ribosomal subunit protein uL15">
    <location>
        <begin position="1"/>
        <end position="146"/>
    </location>
</feature>
<feature type="region of interest" description="Disordered" evidence="2">
    <location>
        <begin position="1"/>
        <end position="51"/>
    </location>
</feature>
<feature type="compositionally biased region" description="Basic and acidic residues" evidence="2">
    <location>
        <begin position="1"/>
        <end position="13"/>
    </location>
</feature>
<feature type="compositionally biased region" description="Gly residues" evidence="2">
    <location>
        <begin position="21"/>
        <end position="31"/>
    </location>
</feature>
<feature type="compositionally biased region" description="Gly residues" evidence="2">
    <location>
        <begin position="42"/>
        <end position="51"/>
    </location>
</feature>
<keyword id="KW-0687">Ribonucleoprotein</keyword>
<keyword id="KW-0689">Ribosomal protein</keyword>
<keyword id="KW-0694">RNA-binding</keyword>
<keyword id="KW-0699">rRNA-binding</keyword>
<comment type="function">
    <text evidence="1">Binds to the 23S rRNA.</text>
</comment>
<comment type="subunit">
    <text evidence="1">Part of the 50S ribosomal subunit.</text>
</comment>
<comment type="similarity">
    <text evidence="1">Belongs to the universal ribosomal protein uL15 family.</text>
</comment>
<reference key="1">
    <citation type="submission" date="2008-10" db="EMBL/GenBank/DDBJ databases">
        <title>Genome sequence of Bacillus cereus G9842.</title>
        <authorList>
            <person name="Dodson R.J."/>
            <person name="Durkin A.S."/>
            <person name="Rosovitz M.J."/>
            <person name="Rasko D.A."/>
            <person name="Hoffmaster A."/>
            <person name="Ravel J."/>
            <person name="Sutton G."/>
        </authorList>
    </citation>
    <scope>NUCLEOTIDE SEQUENCE [LARGE SCALE GENOMIC DNA]</scope>
    <source>
        <strain>G9842</strain>
    </source>
</reference>
<dbReference type="EMBL" id="CP001186">
    <property type="protein sequence ID" value="ACK95567.1"/>
    <property type="molecule type" value="Genomic_DNA"/>
</dbReference>
<dbReference type="RefSeq" id="WP_000766083.1">
    <property type="nucleotide sequence ID" value="NC_011772.1"/>
</dbReference>
<dbReference type="SMR" id="B7IT38"/>
<dbReference type="GeneID" id="92887822"/>
<dbReference type="KEGG" id="bcg:BCG9842_B5176"/>
<dbReference type="HOGENOM" id="CLU_055188_4_2_9"/>
<dbReference type="Proteomes" id="UP000006744">
    <property type="component" value="Chromosome"/>
</dbReference>
<dbReference type="GO" id="GO:0022625">
    <property type="term" value="C:cytosolic large ribosomal subunit"/>
    <property type="evidence" value="ECO:0007669"/>
    <property type="project" value="TreeGrafter"/>
</dbReference>
<dbReference type="GO" id="GO:0019843">
    <property type="term" value="F:rRNA binding"/>
    <property type="evidence" value="ECO:0007669"/>
    <property type="project" value="UniProtKB-UniRule"/>
</dbReference>
<dbReference type="GO" id="GO:0003735">
    <property type="term" value="F:structural constituent of ribosome"/>
    <property type="evidence" value="ECO:0007669"/>
    <property type="project" value="InterPro"/>
</dbReference>
<dbReference type="GO" id="GO:0006412">
    <property type="term" value="P:translation"/>
    <property type="evidence" value="ECO:0007669"/>
    <property type="project" value="UniProtKB-UniRule"/>
</dbReference>
<dbReference type="FunFam" id="3.100.10.10:FF:000004">
    <property type="entry name" value="50S ribosomal protein L15"/>
    <property type="match status" value="1"/>
</dbReference>
<dbReference type="Gene3D" id="3.100.10.10">
    <property type="match status" value="1"/>
</dbReference>
<dbReference type="HAMAP" id="MF_01341">
    <property type="entry name" value="Ribosomal_uL15"/>
    <property type="match status" value="1"/>
</dbReference>
<dbReference type="InterPro" id="IPR030878">
    <property type="entry name" value="Ribosomal_uL15"/>
</dbReference>
<dbReference type="InterPro" id="IPR021131">
    <property type="entry name" value="Ribosomal_uL15/eL18"/>
</dbReference>
<dbReference type="InterPro" id="IPR036227">
    <property type="entry name" value="Ribosomal_uL15/eL18_sf"/>
</dbReference>
<dbReference type="InterPro" id="IPR005749">
    <property type="entry name" value="Ribosomal_uL15_bac-type"/>
</dbReference>
<dbReference type="InterPro" id="IPR001196">
    <property type="entry name" value="Ribosomal_uL15_CS"/>
</dbReference>
<dbReference type="NCBIfam" id="TIGR01071">
    <property type="entry name" value="rplO_bact"/>
    <property type="match status" value="1"/>
</dbReference>
<dbReference type="PANTHER" id="PTHR12934">
    <property type="entry name" value="50S RIBOSOMAL PROTEIN L15"/>
    <property type="match status" value="1"/>
</dbReference>
<dbReference type="PANTHER" id="PTHR12934:SF11">
    <property type="entry name" value="LARGE RIBOSOMAL SUBUNIT PROTEIN UL15M"/>
    <property type="match status" value="1"/>
</dbReference>
<dbReference type="Pfam" id="PF00828">
    <property type="entry name" value="Ribosomal_L27A"/>
    <property type="match status" value="1"/>
</dbReference>
<dbReference type="SUPFAM" id="SSF52080">
    <property type="entry name" value="Ribosomal proteins L15p and L18e"/>
    <property type="match status" value="1"/>
</dbReference>
<dbReference type="PROSITE" id="PS00475">
    <property type="entry name" value="RIBOSOMAL_L15"/>
    <property type="match status" value="1"/>
</dbReference>
<accession>B7IT38</accession>
<protein>
    <recommendedName>
        <fullName evidence="1">Large ribosomal subunit protein uL15</fullName>
    </recommendedName>
    <alternativeName>
        <fullName evidence="3">50S ribosomal protein L15</fullName>
    </alternativeName>
</protein>